<accession>Q5P1H4</accession>
<comment type="function">
    <text evidence="1">Participates actively in the response to hyperosmotic and heat shock by preventing the aggregation of stress-denatured proteins, in association with DnaK and GrpE. It is the nucleotide exchange factor for DnaK and may function as a thermosensor. Unfolded proteins bind initially to DnaJ; upon interaction with the DnaJ-bound protein, DnaK hydrolyzes its bound ATP, resulting in the formation of a stable complex. GrpE releases ADP from DnaK; ATP binding to DnaK triggers the release of the substrate protein, thus completing the reaction cycle. Several rounds of ATP-dependent interactions between DnaJ, DnaK and GrpE are required for fully efficient folding.</text>
</comment>
<comment type="subunit">
    <text evidence="1">Homodimer.</text>
</comment>
<comment type="subcellular location">
    <subcellularLocation>
        <location evidence="1">Cytoplasm</location>
    </subcellularLocation>
</comment>
<comment type="similarity">
    <text evidence="1">Belongs to the GrpE family.</text>
</comment>
<dbReference type="EMBL" id="CR555306">
    <property type="protein sequence ID" value="CAI08840.1"/>
    <property type="molecule type" value="Genomic_DNA"/>
</dbReference>
<dbReference type="RefSeq" id="WP_011238523.1">
    <property type="nucleotide sequence ID" value="NC_006513.1"/>
</dbReference>
<dbReference type="SMR" id="Q5P1H4"/>
<dbReference type="STRING" id="76114.ebA4795"/>
<dbReference type="KEGG" id="eba:ebA4795"/>
<dbReference type="eggNOG" id="COG0576">
    <property type="taxonomic scope" value="Bacteria"/>
</dbReference>
<dbReference type="HOGENOM" id="CLU_057217_6_1_4"/>
<dbReference type="OrthoDB" id="9789811at2"/>
<dbReference type="Proteomes" id="UP000006552">
    <property type="component" value="Chromosome"/>
</dbReference>
<dbReference type="GO" id="GO:0005829">
    <property type="term" value="C:cytosol"/>
    <property type="evidence" value="ECO:0007669"/>
    <property type="project" value="TreeGrafter"/>
</dbReference>
<dbReference type="GO" id="GO:0000774">
    <property type="term" value="F:adenyl-nucleotide exchange factor activity"/>
    <property type="evidence" value="ECO:0007669"/>
    <property type="project" value="InterPro"/>
</dbReference>
<dbReference type="GO" id="GO:0042803">
    <property type="term" value="F:protein homodimerization activity"/>
    <property type="evidence" value="ECO:0007669"/>
    <property type="project" value="InterPro"/>
</dbReference>
<dbReference type="GO" id="GO:0051087">
    <property type="term" value="F:protein-folding chaperone binding"/>
    <property type="evidence" value="ECO:0007669"/>
    <property type="project" value="InterPro"/>
</dbReference>
<dbReference type="GO" id="GO:0051082">
    <property type="term" value="F:unfolded protein binding"/>
    <property type="evidence" value="ECO:0007669"/>
    <property type="project" value="TreeGrafter"/>
</dbReference>
<dbReference type="GO" id="GO:0006457">
    <property type="term" value="P:protein folding"/>
    <property type="evidence" value="ECO:0007669"/>
    <property type="project" value="InterPro"/>
</dbReference>
<dbReference type="CDD" id="cd00446">
    <property type="entry name" value="GrpE"/>
    <property type="match status" value="1"/>
</dbReference>
<dbReference type="FunFam" id="2.30.22.10:FF:000001">
    <property type="entry name" value="Protein GrpE"/>
    <property type="match status" value="1"/>
</dbReference>
<dbReference type="Gene3D" id="3.90.20.20">
    <property type="match status" value="1"/>
</dbReference>
<dbReference type="Gene3D" id="2.30.22.10">
    <property type="entry name" value="Head domain of nucleotide exchange factor GrpE"/>
    <property type="match status" value="1"/>
</dbReference>
<dbReference type="HAMAP" id="MF_01151">
    <property type="entry name" value="GrpE"/>
    <property type="match status" value="1"/>
</dbReference>
<dbReference type="InterPro" id="IPR000740">
    <property type="entry name" value="GrpE"/>
</dbReference>
<dbReference type="InterPro" id="IPR013805">
    <property type="entry name" value="GrpE_coiled_coil"/>
</dbReference>
<dbReference type="InterPro" id="IPR009012">
    <property type="entry name" value="GrpE_head"/>
</dbReference>
<dbReference type="NCBIfam" id="NF010737">
    <property type="entry name" value="PRK14139.1"/>
    <property type="match status" value="1"/>
</dbReference>
<dbReference type="NCBIfam" id="NF010738">
    <property type="entry name" value="PRK14140.1"/>
    <property type="match status" value="1"/>
</dbReference>
<dbReference type="NCBIfam" id="NF010748">
    <property type="entry name" value="PRK14150.1"/>
    <property type="match status" value="1"/>
</dbReference>
<dbReference type="PANTHER" id="PTHR21237">
    <property type="entry name" value="GRPE PROTEIN"/>
    <property type="match status" value="1"/>
</dbReference>
<dbReference type="PANTHER" id="PTHR21237:SF23">
    <property type="entry name" value="GRPE PROTEIN HOMOLOG, MITOCHONDRIAL"/>
    <property type="match status" value="1"/>
</dbReference>
<dbReference type="Pfam" id="PF01025">
    <property type="entry name" value="GrpE"/>
    <property type="match status" value="1"/>
</dbReference>
<dbReference type="PRINTS" id="PR00773">
    <property type="entry name" value="GRPEPROTEIN"/>
</dbReference>
<dbReference type="SUPFAM" id="SSF58014">
    <property type="entry name" value="Coiled-coil domain of nucleotide exchange factor GrpE"/>
    <property type="match status" value="1"/>
</dbReference>
<dbReference type="SUPFAM" id="SSF51064">
    <property type="entry name" value="Head domain of nucleotide exchange factor GrpE"/>
    <property type="match status" value="1"/>
</dbReference>
<dbReference type="PROSITE" id="PS01071">
    <property type="entry name" value="GRPE"/>
    <property type="match status" value="1"/>
</dbReference>
<sequence>MQENKQPSEIQGELPQPPDGESVPPQPTNEQAPPDTDTMPRIEETLRQLELKAAEHHDAWLRARAETENVRRRAQEDIAKASKFAAEKFAAAMLPVKDSLEAALTIEKQTLESLREGVELTLKQLNAAFQNGGLTEEDPAGQKFDPNKHQAISAIEAEGEPNTVLNVLQKGYLLHGRVIRPAMVMVSKAKGT</sequence>
<keyword id="KW-0143">Chaperone</keyword>
<keyword id="KW-0963">Cytoplasm</keyword>
<keyword id="KW-1185">Reference proteome</keyword>
<keyword id="KW-0346">Stress response</keyword>
<organism>
    <name type="scientific">Aromatoleum aromaticum (strain DSM 19018 / LMG 30748 / EbN1)</name>
    <name type="common">Azoarcus sp. (strain EbN1)</name>
    <dbReference type="NCBI Taxonomy" id="76114"/>
    <lineage>
        <taxon>Bacteria</taxon>
        <taxon>Pseudomonadati</taxon>
        <taxon>Pseudomonadota</taxon>
        <taxon>Betaproteobacteria</taxon>
        <taxon>Rhodocyclales</taxon>
        <taxon>Rhodocyclaceae</taxon>
        <taxon>Aromatoleum</taxon>
    </lineage>
</organism>
<reference key="1">
    <citation type="journal article" date="2005" name="Arch. Microbiol.">
        <title>The genome sequence of an anaerobic aromatic-degrading denitrifying bacterium, strain EbN1.</title>
        <authorList>
            <person name="Rabus R."/>
            <person name="Kube M."/>
            <person name="Heider J."/>
            <person name="Beck A."/>
            <person name="Heitmann K."/>
            <person name="Widdel F."/>
            <person name="Reinhardt R."/>
        </authorList>
    </citation>
    <scope>NUCLEOTIDE SEQUENCE [LARGE SCALE GENOMIC DNA]</scope>
    <source>
        <strain>DSM 19018 / LMG 30748 / EbN1</strain>
    </source>
</reference>
<protein>
    <recommendedName>
        <fullName evidence="1">Protein GrpE</fullName>
    </recommendedName>
    <alternativeName>
        <fullName evidence="1">HSP-70 cofactor</fullName>
    </alternativeName>
</protein>
<feature type="chain" id="PRO_1000137537" description="Protein GrpE">
    <location>
        <begin position="1"/>
        <end position="192"/>
    </location>
</feature>
<feature type="region of interest" description="Disordered" evidence="2">
    <location>
        <begin position="1"/>
        <end position="43"/>
    </location>
</feature>
<gene>
    <name evidence="1" type="primary">grpE</name>
    <name type="ordered locus">AZOSEA27150</name>
    <name type="ORF">ebA4795</name>
</gene>
<name>GRPE_AROAE</name>
<evidence type="ECO:0000255" key="1">
    <source>
        <dbReference type="HAMAP-Rule" id="MF_01151"/>
    </source>
</evidence>
<evidence type="ECO:0000256" key="2">
    <source>
        <dbReference type="SAM" id="MobiDB-lite"/>
    </source>
</evidence>
<proteinExistence type="inferred from homology"/>